<gene>
    <name type="ordered locus">YHR140W</name>
</gene>
<comment type="subcellular location">
    <subcellularLocation>
        <location evidence="2">Endoplasmic reticulum membrane</location>
        <topology evidence="2">Multi-pass membrane protein</topology>
    </subcellularLocation>
</comment>
<comment type="similarity">
    <text evidence="3">Belongs to the UPF0641 family.</text>
</comment>
<comment type="caution">
    <text evidence="3">It is uncertain whether Met-1 or Met-2 is the initiator.</text>
</comment>
<feature type="chain" id="PRO_0000202921" description="UPF0641 membrane protein YHR140W">
    <location>
        <begin position="1"/>
        <end position="239"/>
    </location>
</feature>
<feature type="topological domain" description="Cytoplasmic" evidence="1">
    <location>
        <begin position="1"/>
        <end position="11"/>
    </location>
</feature>
<feature type="transmembrane region" description="Helical" evidence="1">
    <location>
        <begin position="12"/>
        <end position="31"/>
    </location>
</feature>
<feature type="topological domain" description="Lumenal" evidence="1">
    <location>
        <begin position="32"/>
        <end position="45"/>
    </location>
</feature>
<feature type="transmembrane region" description="Helical" evidence="1">
    <location>
        <begin position="46"/>
        <end position="66"/>
    </location>
</feature>
<feature type="topological domain" description="Cytoplasmic" evidence="1">
    <location>
        <begin position="67"/>
        <end position="99"/>
    </location>
</feature>
<feature type="transmembrane region" description="Helical" evidence="1">
    <location>
        <begin position="100"/>
        <end position="120"/>
    </location>
</feature>
<feature type="topological domain" description="Lumenal" evidence="1">
    <location>
        <begin position="121"/>
        <end position="125"/>
    </location>
</feature>
<feature type="transmembrane region" description="Helical" evidence="1">
    <location>
        <begin position="126"/>
        <end position="146"/>
    </location>
</feature>
<feature type="topological domain" description="Cytoplasmic" evidence="1">
    <location>
        <begin position="147"/>
        <end position="162"/>
    </location>
</feature>
<feature type="transmembrane region" description="Helical" evidence="1">
    <location>
        <begin position="163"/>
        <end position="183"/>
    </location>
</feature>
<feature type="topological domain" description="Lumenal" evidence="1">
    <location>
        <begin position="184"/>
        <end position="204"/>
    </location>
</feature>
<feature type="transmembrane region" description="Helical" evidence="1">
    <location>
        <begin position="205"/>
        <end position="225"/>
    </location>
</feature>
<feature type="topological domain" description="Cytoplasmic" evidence="1">
    <location>
        <begin position="226"/>
        <end position="239"/>
    </location>
</feature>
<reference key="1">
    <citation type="journal article" date="1994" name="Science">
        <title>Complete nucleotide sequence of Saccharomyces cerevisiae chromosome VIII.</title>
        <authorList>
            <person name="Johnston M."/>
            <person name="Andrews S."/>
            <person name="Brinkman R."/>
            <person name="Cooper J."/>
            <person name="Ding H."/>
            <person name="Dover J."/>
            <person name="Du Z."/>
            <person name="Favello A."/>
            <person name="Fulton L."/>
            <person name="Gattung S."/>
            <person name="Geisel C."/>
            <person name="Kirsten J."/>
            <person name="Kucaba T."/>
            <person name="Hillier L.W."/>
            <person name="Jier M."/>
            <person name="Johnston L."/>
            <person name="Langston Y."/>
            <person name="Latreille P."/>
            <person name="Louis E.J."/>
            <person name="Macri C."/>
            <person name="Mardis E."/>
            <person name="Menezes S."/>
            <person name="Mouser L."/>
            <person name="Nhan M."/>
            <person name="Rifkin L."/>
            <person name="Riles L."/>
            <person name="St Peter H."/>
            <person name="Trevaskis E."/>
            <person name="Vaughan K."/>
            <person name="Vignati D."/>
            <person name="Wilcox L."/>
            <person name="Wohldman P."/>
            <person name="Waterston R."/>
            <person name="Wilson R."/>
            <person name="Vaudin M."/>
        </authorList>
    </citation>
    <scope>NUCLEOTIDE SEQUENCE [LARGE SCALE GENOMIC DNA]</scope>
    <source>
        <strain>ATCC 204508 / S288c</strain>
    </source>
</reference>
<reference key="2">
    <citation type="journal article" date="2014" name="G3 (Bethesda)">
        <title>The reference genome sequence of Saccharomyces cerevisiae: Then and now.</title>
        <authorList>
            <person name="Engel S.R."/>
            <person name="Dietrich F.S."/>
            <person name="Fisk D.G."/>
            <person name="Binkley G."/>
            <person name="Balakrishnan R."/>
            <person name="Costanzo M.C."/>
            <person name="Dwight S.S."/>
            <person name="Hitz B.C."/>
            <person name="Karra K."/>
            <person name="Nash R.S."/>
            <person name="Weng S."/>
            <person name="Wong E.D."/>
            <person name="Lloyd P."/>
            <person name="Skrzypek M.S."/>
            <person name="Miyasato S.R."/>
            <person name="Simison M."/>
            <person name="Cherry J.M."/>
        </authorList>
    </citation>
    <scope>GENOME REANNOTATION</scope>
    <source>
        <strain>ATCC 204508 / S288c</strain>
    </source>
</reference>
<reference key="3">
    <citation type="journal article" date="2007" name="Genome Res.">
        <title>Approaching a complete repository of sequence-verified protein-encoding clones for Saccharomyces cerevisiae.</title>
        <authorList>
            <person name="Hu Y."/>
            <person name="Rolfs A."/>
            <person name="Bhullar B."/>
            <person name="Murthy T.V.S."/>
            <person name="Zhu C."/>
            <person name="Berger M.F."/>
            <person name="Camargo A.A."/>
            <person name="Kelley F."/>
            <person name="McCarron S."/>
            <person name="Jepson D."/>
            <person name="Richardson A."/>
            <person name="Raphael J."/>
            <person name="Moreira D."/>
            <person name="Taycher E."/>
            <person name="Zuo D."/>
            <person name="Mohr S."/>
            <person name="Kane M.F."/>
            <person name="Williamson J."/>
            <person name="Simpson A.J.G."/>
            <person name="Bulyk M.L."/>
            <person name="Harlow E."/>
            <person name="Marsischky G."/>
            <person name="Kolodner R.D."/>
            <person name="LaBaer J."/>
        </authorList>
    </citation>
    <scope>NUCLEOTIDE SEQUENCE [GENOMIC DNA]</scope>
    <source>
        <strain>ATCC 204508 / S288c</strain>
    </source>
</reference>
<reference key="4">
    <citation type="journal article" date="2002" name="Genes Dev.">
        <title>Subcellular localization of the yeast proteome.</title>
        <authorList>
            <person name="Kumar A."/>
            <person name="Agarwal S."/>
            <person name="Heyman J.A."/>
            <person name="Matson S."/>
            <person name="Heidtman M."/>
            <person name="Piccirillo S."/>
            <person name="Umansky L."/>
            <person name="Drawid A."/>
            <person name="Jansen R."/>
            <person name="Liu Y."/>
            <person name="Cheung K.-H."/>
            <person name="Miller P."/>
            <person name="Gerstein M."/>
            <person name="Roeder G.S."/>
            <person name="Snyder M."/>
        </authorList>
    </citation>
    <scope>SUBCELLULAR LOCATION</scope>
</reference>
<reference key="5">
    <citation type="journal article" date="2003" name="J. Biol. Chem.">
        <title>Topology models for 37 Saccharomyces cerevisiae membrane proteins based on C-terminal reporter fusions and predictions.</title>
        <authorList>
            <person name="Kim H."/>
            <person name="Melen K."/>
            <person name="von Heijne G."/>
        </authorList>
    </citation>
    <scope>TOPOLOGY</scope>
</reference>
<reference key="6">
    <citation type="journal article" date="2006" name="Proc. Natl. Acad. Sci. U.S.A.">
        <title>A global topology map of the Saccharomyces cerevisiae membrane proteome.</title>
        <authorList>
            <person name="Kim H."/>
            <person name="Melen K."/>
            <person name="Oesterberg M."/>
            <person name="von Heijne G."/>
        </authorList>
    </citation>
    <scope>TOPOLOGY [LARGE SCALE ANALYSIS]</scope>
    <source>
        <strain>ATCC 208353 / W303-1A</strain>
    </source>
</reference>
<name>YHU0_YEAST</name>
<accession>P38842</accession>
<accession>D3DL89</accession>
<accession>Q6B2K3</accession>
<organism>
    <name type="scientific">Saccharomyces cerevisiae (strain ATCC 204508 / S288c)</name>
    <name type="common">Baker's yeast</name>
    <dbReference type="NCBI Taxonomy" id="559292"/>
    <lineage>
        <taxon>Eukaryota</taxon>
        <taxon>Fungi</taxon>
        <taxon>Dikarya</taxon>
        <taxon>Ascomycota</taxon>
        <taxon>Saccharomycotina</taxon>
        <taxon>Saccharomycetes</taxon>
        <taxon>Saccharomycetales</taxon>
        <taxon>Saccharomycetaceae</taxon>
        <taxon>Saccharomyces</taxon>
    </lineage>
</organism>
<sequence>MMSCLVPTRFTLTLNTACLLTSTWGFVRATSVVLPPSLSKAGHKQFLTIISIIATIINNAVNISNYYIQRNNKMNLETKKKSDFISRHVTLPVSLVLESIVATVYWPLRLFFVNLIMHGVESTAKTPFPMTVDMAIHLYPILYLLADHYLSGSGTKFKLSNKHAWLIVTSLAFSYFQYLAFLIDAGQGQAYPYPFLDVNEPYKSIIFVVVATITWAYYVFYQKFPPKYIKKSAKKGDKN</sequence>
<evidence type="ECO:0000255" key="1"/>
<evidence type="ECO:0000269" key="2">
    <source>
    </source>
</evidence>
<evidence type="ECO:0000305" key="3"/>
<keyword id="KW-0256">Endoplasmic reticulum</keyword>
<keyword id="KW-0472">Membrane</keyword>
<keyword id="KW-1185">Reference proteome</keyword>
<keyword id="KW-0812">Transmembrane</keyword>
<keyword id="KW-1133">Transmembrane helix</keyword>
<dbReference type="EMBL" id="U10398">
    <property type="protein sequence ID" value="AAB68402.1"/>
    <property type="molecule type" value="Genomic_DNA"/>
</dbReference>
<dbReference type="EMBL" id="AY692727">
    <property type="protein sequence ID" value="AAT92746.1"/>
    <property type="molecule type" value="Genomic_DNA"/>
</dbReference>
<dbReference type="EMBL" id="BK006934">
    <property type="protein sequence ID" value="DAA06833.1"/>
    <property type="molecule type" value="Genomic_DNA"/>
</dbReference>
<dbReference type="PIR" id="S48984">
    <property type="entry name" value="S48984"/>
</dbReference>
<dbReference type="RefSeq" id="NP_012009.1">
    <property type="nucleotide sequence ID" value="NM_001179270.1"/>
</dbReference>
<dbReference type="BioGRID" id="36573">
    <property type="interactions" value="92"/>
</dbReference>
<dbReference type="DIP" id="DIP-1786N"/>
<dbReference type="FunCoup" id="P38842">
    <property type="interactions" value="124"/>
</dbReference>
<dbReference type="IntAct" id="P38842">
    <property type="interactions" value="10"/>
</dbReference>
<dbReference type="MINT" id="P38842"/>
<dbReference type="STRING" id="4932.YHR140W"/>
<dbReference type="PaxDb" id="4932-YHR140W"/>
<dbReference type="PeptideAtlas" id="P38842"/>
<dbReference type="EnsemblFungi" id="YHR140W_mRNA">
    <property type="protein sequence ID" value="YHR140W"/>
    <property type="gene ID" value="YHR140W"/>
</dbReference>
<dbReference type="GeneID" id="856543"/>
<dbReference type="KEGG" id="sce:YHR140W"/>
<dbReference type="AGR" id="SGD:S000001182"/>
<dbReference type="SGD" id="S000001182">
    <property type="gene designation" value="YHR140W"/>
</dbReference>
<dbReference type="VEuPathDB" id="FungiDB:YHR140W"/>
<dbReference type="eggNOG" id="KOG3989">
    <property type="taxonomic scope" value="Eukaryota"/>
</dbReference>
<dbReference type="HOGENOM" id="CLU_087038_0_0_1"/>
<dbReference type="InParanoid" id="P38842"/>
<dbReference type="OMA" id="CWVEYCA"/>
<dbReference type="OrthoDB" id="1898221at2759"/>
<dbReference type="BioCyc" id="YEAST:G3O-31176-MONOMER"/>
<dbReference type="BioGRID-ORCS" id="856543">
    <property type="hits" value="0 hits in 10 CRISPR screens"/>
</dbReference>
<dbReference type="PRO" id="PR:P38842"/>
<dbReference type="Proteomes" id="UP000002311">
    <property type="component" value="Chromosome VIII"/>
</dbReference>
<dbReference type="RNAct" id="P38842">
    <property type="molecule type" value="protein"/>
</dbReference>
<dbReference type="GO" id="GO:0005737">
    <property type="term" value="C:cytoplasm"/>
    <property type="evidence" value="ECO:0007005"/>
    <property type="project" value="SGD"/>
</dbReference>
<dbReference type="GO" id="GO:0012505">
    <property type="term" value="C:endomembrane system"/>
    <property type="evidence" value="ECO:0000318"/>
    <property type="project" value="GO_Central"/>
</dbReference>
<dbReference type="GO" id="GO:0005783">
    <property type="term" value="C:endoplasmic reticulum"/>
    <property type="evidence" value="ECO:0000314"/>
    <property type="project" value="SGD"/>
</dbReference>
<dbReference type="GO" id="GO:0005789">
    <property type="term" value="C:endoplasmic reticulum membrane"/>
    <property type="evidence" value="ECO:0007669"/>
    <property type="project" value="UniProtKB-SubCell"/>
</dbReference>
<dbReference type="InterPro" id="IPR006838">
    <property type="entry name" value="ADTRP_AIG1"/>
</dbReference>
<dbReference type="PANTHER" id="PTHR10989">
    <property type="entry name" value="ANDROGEN-INDUCED PROTEIN 1-RELATED"/>
    <property type="match status" value="1"/>
</dbReference>
<dbReference type="PANTHER" id="PTHR10989:SF16">
    <property type="entry name" value="AT02829P-RELATED"/>
    <property type="match status" value="1"/>
</dbReference>
<dbReference type="Pfam" id="PF04750">
    <property type="entry name" value="Far-17a_AIG1"/>
    <property type="match status" value="1"/>
</dbReference>
<protein>
    <recommendedName>
        <fullName>UPF0641 membrane protein YHR140W</fullName>
    </recommendedName>
</protein>
<proteinExistence type="evidence at protein level"/>